<organism>
    <name type="scientific">Escherichia coli (strain K12)</name>
    <dbReference type="NCBI Taxonomy" id="83333"/>
    <lineage>
        <taxon>Bacteria</taxon>
        <taxon>Pseudomonadati</taxon>
        <taxon>Pseudomonadota</taxon>
        <taxon>Gammaproteobacteria</taxon>
        <taxon>Enterobacterales</taxon>
        <taxon>Enterobacteriaceae</taxon>
        <taxon>Escherichia</taxon>
    </lineage>
</organism>
<proteinExistence type="evidence at transcript level"/>
<accession>A5A624</accession>
<protein>
    <recommendedName>
        <fullName>Uncharacterized protein DinQ</fullName>
    </recommendedName>
</protein>
<gene>
    <name evidence="3" type="primary">dinQ</name>
    <name type="ordered locus">b4613</name>
</gene>
<reference key="1">
    <citation type="journal article" date="1997" name="Science">
        <title>The complete genome sequence of Escherichia coli K-12.</title>
        <authorList>
            <person name="Blattner F.R."/>
            <person name="Plunkett G. III"/>
            <person name="Bloch C.A."/>
            <person name="Perna N.T."/>
            <person name="Burland V."/>
            <person name="Riley M."/>
            <person name="Collado-Vides J."/>
            <person name="Glasner J.D."/>
            <person name="Rode C.K."/>
            <person name="Mayhew G.F."/>
            <person name="Gregor J."/>
            <person name="Davis N.W."/>
            <person name="Kirkpatrick H.A."/>
            <person name="Goeden M.A."/>
            <person name="Rose D.J."/>
            <person name="Mau B."/>
            <person name="Shao Y."/>
        </authorList>
    </citation>
    <scope>NUCLEOTIDE SEQUENCE [LARGE SCALE GENOMIC DNA]</scope>
    <source>
        <strain>K12 / MG1655 / ATCC 47076</strain>
    </source>
</reference>
<reference key="2">
    <citation type="journal article" date="2000" name="Mol. Microbiol.">
        <title>Identification of additional genes belonging to the LexA regulon in Escherichia coli.</title>
        <authorList>
            <person name="Fernandez De Henestrosa A.R."/>
            <person name="Ogi T."/>
            <person name="Aoyagi S."/>
            <person name="Chafin D."/>
            <person name="Hayes J.J."/>
            <person name="Ohmori H."/>
            <person name="Woodgate R."/>
        </authorList>
    </citation>
    <scope>REGULATION BY LEXA</scope>
    <scope>INDUCTION</scope>
    <source>
        <strain>K12 / RW118</strain>
    </source>
</reference>
<comment type="subcellular location">
    <subcellularLocation>
        <location evidence="4">Cell inner membrane</location>
        <topology evidence="4">Single-pass membrane protein</topology>
    </subcellularLocation>
</comment>
<comment type="induction">
    <text evidence="2">Repressed by LexA, induced by DNA damage.</text>
</comment>
<comment type="similarity">
    <text evidence="4">Belongs to the DinQ family.</text>
</comment>
<evidence type="ECO:0000255" key="1"/>
<evidence type="ECO:0000269" key="2">
    <source>
    </source>
</evidence>
<evidence type="ECO:0000303" key="3">
    <source>
    </source>
</evidence>
<evidence type="ECO:0000305" key="4"/>
<dbReference type="EMBL" id="U00096">
    <property type="protein sequence ID" value="ABP93453.2"/>
    <property type="molecule type" value="Genomic_DNA"/>
</dbReference>
<dbReference type="RefSeq" id="WP_001295215.1">
    <property type="nucleotide sequence ID" value="NZ_STEB01000046.1"/>
</dbReference>
<dbReference type="RefSeq" id="YP_001165328.2">
    <property type="nucleotide sequence ID" value="NC_000913.3"/>
</dbReference>
<dbReference type="FunCoup" id="A5A624">
    <property type="interactions" value="2"/>
</dbReference>
<dbReference type="STRING" id="511145.b4613"/>
<dbReference type="PaxDb" id="511145-b4613"/>
<dbReference type="EnsemblBacteria" id="ABP93453">
    <property type="protein sequence ID" value="ABP93453"/>
    <property type="gene ID" value="b4613"/>
</dbReference>
<dbReference type="GeneID" id="5061522"/>
<dbReference type="GeneID" id="93778492"/>
<dbReference type="KEGG" id="eco:b4613"/>
<dbReference type="PATRIC" id="fig|511145.12.peg.3603"/>
<dbReference type="InParanoid" id="A5A624"/>
<dbReference type="BioCyc" id="EcoCyc:MONOMER0-1941"/>
<dbReference type="PRO" id="PR:A5A624"/>
<dbReference type="Proteomes" id="UP000000625">
    <property type="component" value="Chromosome"/>
</dbReference>
<dbReference type="GO" id="GO:0016020">
    <property type="term" value="C:membrane"/>
    <property type="evidence" value="ECO:0000314"/>
    <property type="project" value="EcoCyc"/>
</dbReference>
<dbReference type="GO" id="GO:0005886">
    <property type="term" value="C:plasma membrane"/>
    <property type="evidence" value="ECO:0007669"/>
    <property type="project" value="UniProtKB-SubCell"/>
</dbReference>
<dbReference type="GO" id="GO:0006974">
    <property type="term" value="P:DNA damage response"/>
    <property type="evidence" value="ECO:0000270"/>
    <property type="project" value="EcoliWiki"/>
</dbReference>
<dbReference type="InterPro" id="IPR048189">
    <property type="entry name" value="DinQ-like"/>
</dbReference>
<dbReference type="NCBIfam" id="NF041472">
    <property type="entry name" value="toxin_DinQ"/>
    <property type="match status" value="1"/>
</dbReference>
<sequence>MIDKAIIVLGALIALLELIRFLLQLLN</sequence>
<feature type="chain" id="PRO_0000311853" description="Uncharacterized protein DinQ">
    <location>
        <begin position="1"/>
        <end position="27"/>
    </location>
</feature>
<feature type="transmembrane region" description="Helical" evidence="1">
    <location>
        <begin position="6"/>
        <end position="26"/>
    </location>
</feature>
<keyword id="KW-0997">Cell inner membrane</keyword>
<keyword id="KW-1003">Cell membrane</keyword>
<keyword id="KW-0472">Membrane</keyword>
<keyword id="KW-1185">Reference proteome</keyword>
<keyword id="KW-0812">Transmembrane</keyword>
<keyword id="KW-1133">Transmembrane helix</keyword>
<name>DINQ_ECOLI</name>